<name>TRMFO_STAAE</name>
<keyword id="KW-0963">Cytoplasm</keyword>
<keyword id="KW-0274">FAD</keyword>
<keyword id="KW-0285">Flavoprotein</keyword>
<keyword id="KW-0489">Methyltransferase</keyword>
<keyword id="KW-0520">NAD</keyword>
<keyword id="KW-0521">NADP</keyword>
<keyword id="KW-0808">Transferase</keyword>
<keyword id="KW-0819">tRNA processing</keyword>
<feature type="chain" id="PRO_1000072979" description="Methylenetetrahydrofolate--tRNA-(uracil-5-)-methyltransferase TrmFO">
    <location>
        <begin position="1"/>
        <end position="435"/>
    </location>
</feature>
<feature type="binding site" evidence="1">
    <location>
        <begin position="9"/>
        <end position="14"/>
    </location>
    <ligand>
        <name>FAD</name>
        <dbReference type="ChEBI" id="CHEBI:57692"/>
    </ligand>
</feature>
<protein>
    <recommendedName>
        <fullName evidence="1">Methylenetetrahydrofolate--tRNA-(uracil-5-)-methyltransferase TrmFO</fullName>
        <ecNumber evidence="1">2.1.1.74</ecNumber>
    </recommendedName>
    <alternativeName>
        <fullName evidence="1">Folate-dependent tRNA (uracil-5-)-methyltransferase</fullName>
    </alternativeName>
    <alternativeName>
        <fullName evidence="1">Folate-dependent tRNA(M-5-U54)-methyltransferase</fullName>
    </alternativeName>
</protein>
<gene>
    <name evidence="1" type="primary">trmFO</name>
    <name type="synonym">gid</name>
    <name type="ordered locus">NWMN_1161</name>
</gene>
<sequence length="435" mass="48371">MTQTVNVIGAGLAGSEAAYQLAERGIKVNLIEMRPVKQTPAHHTDKFAELVCSNSLRGNALTNGVGVLKEEMRRLNSIIIEAADKARVPAGGALAVDRHDFSGYITETLKNHENITVINEEINAIPDGYTIIATGPLTTETLAQEIVDITGKDQLYFYDAAAPIIEKESIDMDKVYLKSRYDKGEAAYLNCPMTEDEFNRFYDAVLEAEVAPVNSFEKEKYFEGCMPFEVMAERGRKTLLFGPMKPVGLEDPKTGKRPYAVVQLRQDDAAGTLYNIVGFQTHLKWGAQKEVIKLIPGLENVDIVRYGVMHRNTFINSPDVLNEKYELISQPNIQFAGQMTGVEGYVESAASGLVAGINLAHKILGKGEVVFPRETMIGSMAYYISHAKNNKNFQPMNANFGLLPSLETRIKDKKERYEAQANRALDYLENFKKTL</sequence>
<accession>A6QGF1</accession>
<dbReference type="EC" id="2.1.1.74" evidence="1"/>
<dbReference type="EMBL" id="AP009351">
    <property type="protein sequence ID" value="BAF67433.1"/>
    <property type="molecule type" value="Genomic_DNA"/>
</dbReference>
<dbReference type="RefSeq" id="WP_000195254.1">
    <property type="nucleotide sequence ID" value="NZ_JBBIAE010000001.1"/>
</dbReference>
<dbReference type="SMR" id="A6QGF1"/>
<dbReference type="KEGG" id="sae:NWMN_1161"/>
<dbReference type="HOGENOM" id="CLU_033057_1_0_9"/>
<dbReference type="Proteomes" id="UP000006386">
    <property type="component" value="Chromosome"/>
</dbReference>
<dbReference type="GO" id="GO:0005829">
    <property type="term" value="C:cytosol"/>
    <property type="evidence" value="ECO:0007669"/>
    <property type="project" value="TreeGrafter"/>
</dbReference>
<dbReference type="GO" id="GO:0050660">
    <property type="term" value="F:flavin adenine dinucleotide binding"/>
    <property type="evidence" value="ECO:0007669"/>
    <property type="project" value="UniProtKB-UniRule"/>
</dbReference>
<dbReference type="GO" id="GO:0047151">
    <property type="term" value="F:tRNA (uracil(54)-C5)-methyltransferase activity, 5,10-methylenetetrahydrofolate-dependent"/>
    <property type="evidence" value="ECO:0007669"/>
    <property type="project" value="UniProtKB-UniRule"/>
</dbReference>
<dbReference type="GO" id="GO:0030488">
    <property type="term" value="P:tRNA methylation"/>
    <property type="evidence" value="ECO:0007669"/>
    <property type="project" value="TreeGrafter"/>
</dbReference>
<dbReference type="GO" id="GO:0002098">
    <property type="term" value="P:tRNA wobble uridine modification"/>
    <property type="evidence" value="ECO:0007669"/>
    <property type="project" value="TreeGrafter"/>
</dbReference>
<dbReference type="FunFam" id="3.50.50.60:FF:000035">
    <property type="entry name" value="Methylenetetrahydrofolate--tRNA-(uracil-5-)-methyltransferase TrmFO"/>
    <property type="match status" value="1"/>
</dbReference>
<dbReference type="FunFam" id="3.50.50.60:FF:000040">
    <property type="entry name" value="Methylenetetrahydrofolate--tRNA-(uracil-5-)-methyltransferase TrmFO"/>
    <property type="match status" value="1"/>
</dbReference>
<dbReference type="Gene3D" id="3.50.50.60">
    <property type="entry name" value="FAD/NAD(P)-binding domain"/>
    <property type="match status" value="2"/>
</dbReference>
<dbReference type="HAMAP" id="MF_01037">
    <property type="entry name" value="TrmFO"/>
    <property type="match status" value="1"/>
</dbReference>
<dbReference type="InterPro" id="IPR036188">
    <property type="entry name" value="FAD/NAD-bd_sf"/>
</dbReference>
<dbReference type="InterPro" id="IPR002218">
    <property type="entry name" value="MnmG-rel"/>
</dbReference>
<dbReference type="InterPro" id="IPR020595">
    <property type="entry name" value="MnmG-rel_CS"/>
</dbReference>
<dbReference type="InterPro" id="IPR040131">
    <property type="entry name" value="MnmG_N"/>
</dbReference>
<dbReference type="InterPro" id="IPR004417">
    <property type="entry name" value="TrmFO"/>
</dbReference>
<dbReference type="NCBIfam" id="TIGR00137">
    <property type="entry name" value="gid_trmFO"/>
    <property type="match status" value="1"/>
</dbReference>
<dbReference type="NCBIfam" id="NF003739">
    <property type="entry name" value="PRK05335.1"/>
    <property type="match status" value="1"/>
</dbReference>
<dbReference type="PANTHER" id="PTHR11806">
    <property type="entry name" value="GLUCOSE INHIBITED DIVISION PROTEIN A"/>
    <property type="match status" value="1"/>
</dbReference>
<dbReference type="PANTHER" id="PTHR11806:SF2">
    <property type="entry name" value="METHYLENETETRAHYDROFOLATE--TRNA-(URACIL-5-)-METHYLTRANSFERASE TRMFO"/>
    <property type="match status" value="1"/>
</dbReference>
<dbReference type="Pfam" id="PF01134">
    <property type="entry name" value="GIDA"/>
    <property type="match status" value="1"/>
</dbReference>
<dbReference type="SUPFAM" id="SSF51905">
    <property type="entry name" value="FAD/NAD(P)-binding domain"/>
    <property type="match status" value="1"/>
</dbReference>
<dbReference type="PROSITE" id="PS01281">
    <property type="entry name" value="GIDA_2"/>
    <property type="match status" value="1"/>
</dbReference>
<evidence type="ECO:0000255" key="1">
    <source>
        <dbReference type="HAMAP-Rule" id="MF_01037"/>
    </source>
</evidence>
<comment type="function">
    <text evidence="1">Catalyzes the folate-dependent formation of 5-methyl-uridine at position 54 (M-5-U54) in all tRNAs.</text>
</comment>
<comment type="catalytic activity">
    <reaction evidence="1">
        <text>uridine(54) in tRNA + (6R)-5,10-methylene-5,6,7,8-tetrahydrofolate + NADH + H(+) = 5-methyluridine(54) in tRNA + (6S)-5,6,7,8-tetrahydrofolate + NAD(+)</text>
        <dbReference type="Rhea" id="RHEA:16873"/>
        <dbReference type="Rhea" id="RHEA-COMP:10167"/>
        <dbReference type="Rhea" id="RHEA-COMP:10193"/>
        <dbReference type="ChEBI" id="CHEBI:15378"/>
        <dbReference type="ChEBI" id="CHEBI:15636"/>
        <dbReference type="ChEBI" id="CHEBI:57453"/>
        <dbReference type="ChEBI" id="CHEBI:57540"/>
        <dbReference type="ChEBI" id="CHEBI:57945"/>
        <dbReference type="ChEBI" id="CHEBI:65315"/>
        <dbReference type="ChEBI" id="CHEBI:74447"/>
        <dbReference type="EC" id="2.1.1.74"/>
    </reaction>
</comment>
<comment type="catalytic activity">
    <reaction evidence="1">
        <text>uridine(54) in tRNA + (6R)-5,10-methylene-5,6,7,8-tetrahydrofolate + NADPH + H(+) = 5-methyluridine(54) in tRNA + (6S)-5,6,7,8-tetrahydrofolate + NADP(+)</text>
        <dbReference type="Rhea" id="RHEA:62372"/>
        <dbReference type="Rhea" id="RHEA-COMP:10167"/>
        <dbReference type="Rhea" id="RHEA-COMP:10193"/>
        <dbReference type="ChEBI" id="CHEBI:15378"/>
        <dbReference type="ChEBI" id="CHEBI:15636"/>
        <dbReference type="ChEBI" id="CHEBI:57453"/>
        <dbReference type="ChEBI" id="CHEBI:57783"/>
        <dbReference type="ChEBI" id="CHEBI:58349"/>
        <dbReference type="ChEBI" id="CHEBI:65315"/>
        <dbReference type="ChEBI" id="CHEBI:74447"/>
        <dbReference type="EC" id="2.1.1.74"/>
    </reaction>
</comment>
<comment type="cofactor">
    <cofactor evidence="1">
        <name>FAD</name>
        <dbReference type="ChEBI" id="CHEBI:57692"/>
    </cofactor>
</comment>
<comment type="subcellular location">
    <subcellularLocation>
        <location evidence="1">Cytoplasm</location>
    </subcellularLocation>
</comment>
<comment type="similarity">
    <text evidence="1">Belongs to the MnmG family. TrmFO subfamily.</text>
</comment>
<reference key="1">
    <citation type="journal article" date="2008" name="J. Bacteriol.">
        <title>Genome sequence of Staphylococcus aureus strain Newman and comparative analysis of staphylococcal genomes: polymorphism and evolution of two major pathogenicity islands.</title>
        <authorList>
            <person name="Baba T."/>
            <person name="Bae T."/>
            <person name="Schneewind O."/>
            <person name="Takeuchi F."/>
            <person name="Hiramatsu K."/>
        </authorList>
    </citation>
    <scope>NUCLEOTIDE SEQUENCE [LARGE SCALE GENOMIC DNA]</scope>
    <source>
        <strain>Newman</strain>
    </source>
</reference>
<proteinExistence type="inferred from homology"/>
<organism>
    <name type="scientific">Staphylococcus aureus (strain Newman)</name>
    <dbReference type="NCBI Taxonomy" id="426430"/>
    <lineage>
        <taxon>Bacteria</taxon>
        <taxon>Bacillati</taxon>
        <taxon>Bacillota</taxon>
        <taxon>Bacilli</taxon>
        <taxon>Bacillales</taxon>
        <taxon>Staphylococcaceae</taxon>
        <taxon>Staphylococcus</taxon>
    </lineage>
</organism>